<comment type="function">
    <text evidence="1">Plays a continuous role in plant development probably in the structural organization of compartments.</text>
</comment>
<comment type="cofactor">
    <cofactor evidence="1">
        <name>Zn(2+)</name>
        <dbReference type="ChEBI" id="CHEBI:29105"/>
    </cofactor>
    <text evidence="1">Binds 2 Zn(2+) ions per monomer.</text>
</comment>
<comment type="subunit">
    <text evidence="1">Homodimer.</text>
</comment>
<comment type="subcellular location">
    <subcellularLocation>
        <location evidence="4">Membrane</location>
        <topology evidence="4">Lipid-anchor</topology>
    </subcellularLocation>
</comment>
<comment type="tissue specificity">
    <text evidence="3">Expressed in both etiolated and light-grown tissues.</text>
</comment>
<comment type="PTM">
    <text evidence="4">Farnesylated.</text>
</comment>
<comment type="similarity">
    <text evidence="4">Belongs to the DnaJ family. A/I subfamily.</text>
</comment>
<keyword id="KW-0143">Chaperone</keyword>
<keyword id="KW-0449">Lipoprotein</keyword>
<keyword id="KW-0472">Membrane</keyword>
<keyword id="KW-0479">Metal-binding</keyword>
<keyword id="KW-0488">Methylation</keyword>
<keyword id="KW-0636">Prenylation</keyword>
<keyword id="KW-1185">Reference proteome</keyword>
<keyword id="KW-0677">Repeat</keyword>
<keyword id="KW-0862">Zinc</keyword>
<keyword id="KW-0863">Zinc-finger</keyword>
<dbReference type="EMBL" id="L36113">
    <property type="protein sequence ID" value="AAB86799.1"/>
    <property type="molecule type" value="mRNA"/>
</dbReference>
<dbReference type="EMBL" id="AL589883">
    <property type="protein sequence ID" value="CAC34499.1"/>
    <property type="molecule type" value="Genomic_DNA"/>
</dbReference>
<dbReference type="EMBL" id="CP002688">
    <property type="protein sequence ID" value="AED92977.1"/>
    <property type="molecule type" value="Genomic_DNA"/>
</dbReference>
<dbReference type="EMBL" id="AK118386">
    <property type="protein sequence ID" value="BAC42997.1"/>
    <property type="molecule type" value="mRNA"/>
</dbReference>
<dbReference type="EMBL" id="F20032">
    <property type="protein sequence ID" value="CAA23386.1"/>
    <property type="molecule type" value="mRNA"/>
</dbReference>
<dbReference type="SMR" id="P42825"/>
<dbReference type="BioGRID" id="17542">
    <property type="interactions" value="6"/>
</dbReference>
<dbReference type="FunCoup" id="P42825">
    <property type="interactions" value="3545"/>
</dbReference>
<dbReference type="IntAct" id="P42825">
    <property type="interactions" value="1"/>
</dbReference>
<dbReference type="STRING" id="3702.P42825"/>
<dbReference type="SwissPalm" id="P42825"/>
<dbReference type="PaxDb" id="3702-AT5G22060.1"/>
<dbReference type="ProteomicsDB" id="222001"/>
<dbReference type="EnsemblPlants" id="AT5G22060.1">
    <property type="protein sequence ID" value="AT5G22060.1"/>
    <property type="gene ID" value="AT5G22060"/>
</dbReference>
<dbReference type="GeneID" id="832267"/>
<dbReference type="Gramene" id="AT5G22060.1">
    <property type="protein sequence ID" value="AT5G22060.1"/>
    <property type="gene ID" value="AT5G22060"/>
</dbReference>
<dbReference type="KEGG" id="ath:AT5G22060"/>
<dbReference type="Araport" id="AT5G22060"/>
<dbReference type="TAIR" id="AT5G22060">
    <property type="gene designation" value="J2"/>
</dbReference>
<dbReference type="eggNOG" id="KOG0712">
    <property type="taxonomic scope" value="Eukaryota"/>
</dbReference>
<dbReference type="HOGENOM" id="CLU_017633_10_0_1"/>
<dbReference type="InParanoid" id="P42825"/>
<dbReference type="OMA" id="PADMHLH"/>
<dbReference type="OrthoDB" id="550424at2759"/>
<dbReference type="PhylomeDB" id="P42825"/>
<dbReference type="CD-CODE" id="4299E36E">
    <property type="entry name" value="Nucleolus"/>
</dbReference>
<dbReference type="PRO" id="PR:P42825"/>
<dbReference type="Proteomes" id="UP000006548">
    <property type="component" value="Chromosome 5"/>
</dbReference>
<dbReference type="ExpressionAtlas" id="P42825">
    <property type="expression patterns" value="baseline and differential"/>
</dbReference>
<dbReference type="GO" id="GO:0016020">
    <property type="term" value="C:membrane"/>
    <property type="evidence" value="ECO:0007669"/>
    <property type="project" value="UniProtKB-SubCell"/>
</dbReference>
<dbReference type="GO" id="GO:0009506">
    <property type="term" value="C:plasmodesma"/>
    <property type="evidence" value="ECO:0007005"/>
    <property type="project" value="TAIR"/>
</dbReference>
<dbReference type="GO" id="GO:0009536">
    <property type="term" value="C:plastid"/>
    <property type="evidence" value="ECO:0007005"/>
    <property type="project" value="TAIR"/>
</dbReference>
<dbReference type="GO" id="GO:0005524">
    <property type="term" value="F:ATP binding"/>
    <property type="evidence" value="ECO:0007669"/>
    <property type="project" value="InterPro"/>
</dbReference>
<dbReference type="GO" id="GO:0030544">
    <property type="term" value="F:Hsp70 protein binding"/>
    <property type="evidence" value="ECO:0007669"/>
    <property type="project" value="InterPro"/>
</dbReference>
<dbReference type="GO" id="GO:0003729">
    <property type="term" value="F:mRNA binding"/>
    <property type="evidence" value="ECO:0000314"/>
    <property type="project" value="TAIR"/>
</dbReference>
<dbReference type="GO" id="GO:0051082">
    <property type="term" value="F:unfolded protein binding"/>
    <property type="evidence" value="ECO:0007669"/>
    <property type="project" value="InterPro"/>
</dbReference>
<dbReference type="GO" id="GO:0008270">
    <property type="term" value="F:zinc ion binding"/>
    <property type="evidence" value="ECO:0007669"/>
    <property type="project" value="UniProtKB-KW"/>
</dbReference>
<dbReference type="GO" id="GO:0006457">
    <property type="term" value="P:protein folding"/>
    <property type="evidence" value="ECO:0000250"/>
    <property type="project" value="TAIR"/>
</dbReference>
<dbReference type="GO" id="GO:0009408">
    <property type="term" value="P:response to heat"/>
    <property type="evidence" value="ECO:0007669"/>
    <property type="project" value="InterPro"/>
</dbReference>
<dbReference type="CDD" id="cd06257">
    <property type="entry name" value="DnaJ"/>
    <property type="match status" value="1"/>
</dbReference>
<dbReference type="CDD" id="cd10747">
    <property type="entry name" value="DnaJ_C"/>
    <property type="match status" value="1"/>
</dbReference>
<dbReference type="CDD" id="cd10719">
    <property type="entry name" value="DnaJ_zf"/>
    <property type="match status" value="1"/>
</dbReference>
<dbReference type="FunFam" id="2.60.260.20:FF:000068">
    <property type="entry name" value="Chaperone protein dnaJ 3"/>
    <property type="match status" value="1"/>
</dbReference>
<dbReference type="FunFam" id="1.10.287.110:FF:000012">
    <property type="entry name" value="dnaJ protein homolog"/>
    <property type="match status" value="1"/>
</dbReference>
<dbReference type="FunFam" id="2.10.230.10:FF:000001">
    <property type="entry name" value="DnaJ subfamily A member 2"/>
    <property type="match status" value="1"/>
</dbReference>
<dbReference type="FunFam" id="2.60.260.20:FF:000003">
    <property type="entry name" value="DnaJ subfamily A member 2"/>
    <property type="match status" value="1"/>
</dbReference>
<dbReference type="Gene3D" id="1.10.287.110">
    <property type="entry name" value="DnaJ domain"/>
    <property type="match status" value="1"/>
</dbReference>
<dbReference type="Gene3D" id="2.10.230.10">
    <property type="entry name" value="Heat shock protein DnaJ, cysteine-rich domain"/>
    <property type="match status" value="1"/>
</dbReference>
<dbReference type="Gene3D" id="2.60.260.20">
    <property type="entry name" value="Urease metallochaperone UreE, N-terminal domain"/>
    <property type="match status" value="2"/>
</dbReference>
<dbReference type="HAMAP" id="MF_01152">
    <property type="entry name" value="DnaJ"/>
    <property type="match status" value="1"/>
</dbReference>
<dbReference type="InterPro" id="IPR012724">
    <property type="entry name" value="DnaJ"/>
</dbReference>
<dbReference type="InterPro" id="IPR002939">
    <property type="entry name" value="DnaJ_C"/>
</dbReference>
<dbReference type="InterPro" id="IPR001623">
    <property type="entry name" value="DnaJ_domain"/>
</dbReference>
<dbReference type="InterPro" id="IPR018253">
    <property type="entry name" value="DnaJ_domain_CS"/>
</dbReference>
<dbReference type="InterPro" id="IPR044713">
    <property type="entry name" value="DNJA1/2-like"/>
</dbReference>
<dbReference type="InterPro" id="IPR008971">
    <property type="entry name" value="HSP40/DnaJ_pept-bd"/>
</dbReference>
<dbReference type="InterPro" id="IPR001305">
    <property type="entry name" value="HSP_DnaJ_Cys-rich_dom"/>
</dbReference>
<dbReference type="InterPro" id="IPR036410">
    <property type="entry name" value="HSP_DnaJ_Cys-rich_dom_sf"/>
</dbReference>
<dbReference type="InterPro" id="IPR036869">
    <property type="entry name" value="J_dom_sf"/>
</dbReference>
<dbReference type="PANTHER" id="PTHR43888">
    <property type="entry name" value="DNAJ-LIKE-2, ISOFORM A-RELATED"/>
    <property type="match status" value="1"/>
</dbReference>
<dbReference type="Pfam" id="PF00226">
    <property type="entry name" value="DnaJ"/>
    <property type="match status" value="1"/>
</dbReference>
<dbReference type="Pfam" id="PF01556">
    <property type="entry name" value="DnaJ_C"/>
    <property type="match status" value="1"/>
</dbReference>
<dbReference type="Pfam" id="PF00684">
    <property type="entry name" value="DnaJ_CXXCXGXG"/>
    <property type="match status" value="1"/>
</dbReference>
<dbReference type="PRINTS" id="PR00625">
    <property type="entry name" value="JDOMAIN"/>
</dbReference>
<dbReference type="SMART" id="SM00271">
    <property type="entry name" value="DnaJ"/>
    <property type="match status" value="1"/>
</dbReference>
<dbReference type="SUPFAM" id="SSF46565">
    <property type="entry name" value="Chaperone J-domain"/>
    <property type="match status" value="1"/>
</dbReference>
<dbReference type="SUPFAM" id="SSF57938">
    <property type="entry name" value="DnaJ/Hsp40 cysteine-rich domain"/>
    <property type="match status" value="1"/>
</dbReference>
<dbReference type="SUPFAM" id="SSF49493">
    <property type="entry name" value="HSP40/DnaJ peptide-binding domain"/>
    <property type="match status" value="2"/>
</dbReference>
<dbReference type="PROSITE" id="PS00636">
    <property type="entry name" value="DNAJ_1"/>
    <property type="match status" value="1"/>
</dbReference>
<dbReference type="PROSITE" id="PS50076">
    <property type="entry name" value="DNAJ_2"/>
    <property type="match status" value="1"/>
</dbReference>
<dbReference type="PROSITE" id="PS51188">
    <property type="entry name" value="ZF_CR"/>
    <property type="match status" value="1"/>
</dbReference>
<gene>
    <name type="primary">ATJ2</name>
    <name type="synonym">A2</name>
    <name type="synonym">ATJ</name>
    <name type="ordered locus">At5g22060</name>
    <name type="ORF">T6G21.11</name>
    <name type="ORF">T6G21_170</name>
</gene>
<reference key="1">
    <citation type="journal article" date="1995" name="Plant Physiol.">
        <title>ATJ2, an Arabidopsis homolog of Escherichia coli dnaJ.</title>
        <authorList>
            <person name="Zhou R."/>
            <person name="Kroczynska B."/>
            <person name="Hayman G.T."/>
            <person name="Miernyk J.A."/>
        </authorList>
    </citation>
    <scope>NUCLEOTIDE SEQUENCE [MRNA]</scope>
    <scope>TISSUE SPECIFICITY</scope>
    <source>
        <strain>cv. Columbia</strain>
    </source>
</reference>
<reference key="2">
    <citation type="journal article" date="2000" name="Nature">
        <title>Sequence and analysis of chromosome 5 of the plant Arabidopsis thaliana.</title>
        <authorList>
            <person name="Tabata S."/>
            <person name="Kaneko T."/>
            <person name="Nakamura Y."/>
            <person name="Kotani H."/>
            <person name="Kato T."/>
            <person name="Asamizu E."/>
            <person name="Miyajima N."/>
            <person name="Sasamoto S."/>
            <person name="Kimura T."/>
            <person name="Hosouchi T."/>
            <person name="Kawashima K."/>
            <person name="Kohara M."/>
            <person name="Matsumoto M."/>
            <person name="Matsuno A."/>
            <person name="Muraki A."/>
            <person name="Nakayama S."/>
            <person name="Nakazaki N."/>
            <person name="Naruo K."/>
            <person name="Okumura S."/>
            <person name="Shinpo S."/>
            <person name="Takeuchi C."/>
            <person name="Wada T."/>
            <person name="Watanabe A."/>
            <person name="Yamada M."/>
            <person name="Yasuda M."/>
            <person name="Sato S."/>
            <person name="de la Bastide M."/>
            <person name="Huang E."/>
            <person name="Spiegel L."/>
            <person name="Gnoj L."/>
            <person name="O'Shaughnessy A."/>
            <person name="Preston R."/>
            <person name="Habermann K."/>
            <person name="Murray J."/>
            <person name="Johnson D."/>
            <person name="Rohlfing T."/>
            <person name="Nelson J."/>
            <person name="Stoneking T."/>
            <person name="Pepin K."/>
            <person name="Spieth J."/>
            <person name="Sekhon M."/>
            <person name="Armstrong J."/>
            <person name="Becker M."/>
            <person name="Belter E."/>
            <person name="Cordum H."/>
            <person name="Cordes M."/>
            <person name="Courtney L."/>
            <person name="Courtney W."/>
            <person name="Dante M."/>
            <person name="Du H."/>
            <person name="Edwards J."/>
            <person name="Fryman J."/>
            <person name="Haakensen B."/>
            <person name="Lamar E."/>
            <person name="Latreille P."/>
            <person name="Leonard S."/>
            <person name="Meyer R."/>
            <person name="Mulvaney E."/>
            <person name="Ozersky P."/>
            <person name="Riley A."/>
            <person name="Strowmatt C."/>
            <person name="Wagner-McPherson C."/>
            <person name="Wollam A."/>
            <person name="Yoakum M."/>
            <person name="Bell M."/>
            <person name="Dedhia N."/>
            <person name="Parnell L."/>
            <person name="Shah R."/>
            <person name="Rodriguez M."/>
            <person name="Hoon See L."/>
            <person name="Vil D."/>
            <person name="Baker J."/>
            <person name="Kirchoff K."/>
            <person name="Toth K."/>
            <person name="King L."/>
            <person name="Bahret A."/>
            <person name="Miller B."/>
            <person name="Marra M.A."/>
            <person name="Martienssen R."/>
            <person name="McCombie W.R."/>
            <person name="Wilson R.K."/>
            <person name="Murphy G."/>
            <person name="Bancroft I."/>
            <person name="Volckaert G."/>
            <person name="Wambutt R."/>
            <person name="Duesterhoeft A."/>
            <person name="Stiekema W."/>
            <person name="Pohl T."/>
            <person name="Entian K.-D."/>
            <person name="Terryn N."/>
            <person name="Hartley N."/>
            <person name="Bent E."/>
            <person name="Johnson S."/>
            <person name="Langham S.-A."/>
            <person name="McCullagh B."/>
            <person name="Robben J."/>
            <person name="Grymonprez B."/>
            <person name="Zimmermann W."/>
            <person name="Ramsperger U."/>
            <person name="Wedler H."/>
            <person name="Balke K."/>
            <person name="Wedler E."/>
            <person name="Peters S."/>
            <person name="van Staveren M."/>
            <person name="Dirkse W."/>
            <person name="Mooijman P."/>
            <person name="Klein Lankhorst R."/>
            <person name="Weitzenegger T."/>
            <person name="Bothe G."/>
            <person name="Rose M."/>
            <person name="Hauf J."/>
            <person name="Berneiser S."/>
            <person name="Hempel S."/>
            <person name="Feldpausch M."/>
            <person name="Lamberth S."/>
            <person name="Villarroel R."/>
            <person name="Gielen J."/>
            <person name="Ardiles W."/>
            <person name="Bents O."/>
            <person name="Lemcke K."/>
            <person name="Kolesov G."/>
            <person name="Mayer K.F.X."/>
            <person name="Rudd S."/>
            <person name="Schoof H."/>
            <person name="Schueller C."/>
            <person name="Zaccaria P."/>
            <person name="Mewes H.-W."/>
            <person name="Bevan M."/>
            <person name="Fransz P.F."/>
        </authorList>
    </citation>
    <scope>NUCLEOTIDE SEQUENCE [LARGE SCALE GENOMIC DNA]</scope>
    <source>
        <strain>cv. Columbia</strain>
    </source>
</reference>
<reference key="3">
    <citation type="journal article" date="2017" name="Plant J.">
        <title>Araport11: a complete reannotation of the Arabidopsis thaliana reference genome.</title>
        <authorList>
            <person name="Cheng C.Y."/>
            <person name="Krishnakumar V."/>
            <person name="Chan A.P."/>
            <person name="Thibaud-Nissen F."/>
            <person name="Schobel S."/>
            <person name="Town C.D."/>
        </authorList>
    </citation>
    <scope>GENOME REANNOTATION</scope>
    <source>
        <strain>cv. Columbia</strain>
    </source>
</reference>
<reference key="4">
    <citation type="journal article" date="2002" name="Science">
        <title>Functional annotation of a full-length Arabidopsis cDNA collection.</title>
        <authorList>
            <person name="Seki M."/>
            <person name="Narusaka M."/>
            <person name="Kamiya A."/>
            <person name="Ishida J."/>
            <person name="Satou M."/>
            <person name="Sakurai T."/>
            <person name="Nakajima M."/>
            <person name="Enju A."/>
            <person name="Akiyama K."/>
            <person name="Oono Y."/>
            <person name="Muramatsu M."/>
            <person name="Hayashizaki Y."/>
            <person name="Kawai J."/>
            <person name="Carninci P."/>
            <person name="Itoh M."/>
            <person name="Ishii Y."/>
            <person name="Arakawa T."/>
            <person name="Shibata K."/>
            <person name="Shinagawa A."/>
            <person name="Shinozaki K."/>
        </authorList>
    </citation>
    <scope>NUCLEOTIDE SEQUENCE [LARGE SCALE MRNA]</scope>
    <source>
        <strain>cv. Columbia</strain>
    </source>
</reference>
<reference key="5">
    <citation type="journal article" date="1996" name="Plant J.">
        <title>Further progress towards a catalogue of all Arabidopsis genes: analysis of a set of 5000 non-redundant ESTs.</title>
        <authorList>
            <person name="Cooke R."/>
            <person name="Raynal M."/>
            <person name="Laudie M."/>
            <person name="Grellet F."/>
            <person name="Delseny M."/>
            <person name="Morris P.-C."/>
            <person name="Guerrier D."/>
            <person name="Giraudat J."/>
            <person name="Quigley F."/>
            <person name="Clabault G."/>
            <person name="Li Y.-F."/>
            <person name="Mache R."/>
            <person name="Krivitzky M."/>
            <person name="Gy I.J.-J."/>
            <person name="Kreis M."/>
            <person name="Lecharny A."/>
            <person name="Parmentier Y."/>
            <person name="Marbach J."/>
            <person name="Fleck J."/>
            <person name="Clement B."/>
            <person name="Philipps G."/>
            <person name="Herve C."/>
            <person name="Bardet C."/>
            <person name="Tremousaygue D."/>
            <person name="Lescure B."/>
            <person name="Lacomme C."/>
            <person name="Roby D."/>
            <person name="Jourjon M.-F."/>
            <person name="Chabrier P."/>
            <person name="Charpenteau J.-L."/>
            <person name="Desprez T."/>
            <person name="Amselem J."/>
            <person name="Chiapello H."/>
            <person name="Hoefte H."/>
        </authorList>
    </citation>
    <scope>NUCLEOTIDE SEQUENCE [LARGE SCALE MRNA] OF 81-192</scope>
    <source>
        <strain>cv. Columbia</strain>
    </source>
</reference>
<reference key="6">
    <citation type="journal article" date="2000" name="Protein Expr. Purif.">
        <title>Expression of the Arabidopsis thaliana AtJ2 cochaperone protein in Pichia pastoris.</title>
        <authorList>
            <person name="Zhou R."/>
            <person name="Kroczynska B."/>
            <person name="Miernyk J.A."/>
        </authorList>
    </citation>
    <scope>ISOPRENYLATION AT CYS-416</scope>
</reference>
<reference key="7">
    <citation type="journal article" date="2001" name="Cell Stress Chaperones">
        <title>The J-domain proteins of Arabidopsis thaliana: an unexpectedly large and diverse family of chaperones.</title>
        <authorList>
            <person name="Miernyk J.A."/>
        </authorList>
    </citation>
    <scope>GENE FAMILY</scope>
    <scope>NOMENCLATURE</scope>
</reference>
<protein>
    <recommendedName>
        <fullName>Chaperone protein dnaJ 2</fullName>
        <shortName>AtDjA2</shortName>
    </recommendedName>
</protein>
<name>DNAJ2_ARATH</name>
<evidence type="ECO:0000250" key="1"/>
<evidence type="ECO:0000256" key="2">
    <source>
        <dbReference type="SAM" id="MobiDB-lite"/>
    </source>
</evidence>
<evidence type="ECO:0000269" key="3">
    <source>
    </source>
</evidence>
<evidence type="ECO:0000305" key="4"/>
<evidence type="ECO:0000305" key="5">
    <source>
    </source>
</evidence>
<sequence>MFGRGPSRKSDNTKFYEILGVPKTAAPEDLKKAYKKAAIKNHPDKGGDPEKFKELAQAYEVLSDPEKREIYDQYGEDALKEGMGGGGGGHDPFDIFSSFFGSGGHPFGSHSRGRRQRRGEDVVHPLKVSLEDVYLGTTKKLSLSRKALCSKCNGKGSKSGASMKCGGCQGSGMKISIRQFGPGMMQQVQHACNDCKGTGETINDRDRCPQCKGEKVVSEKKVLEVNVEKGMQHNQKITFSGQADEAPDTVTGDIVFVIQQKEHPKFKRKGEDLFVEHTISLTEALCGFQFVLTHLDKRQLLIKSKPGEVVKPDSYKAISDEGMPIYQRPFMKGKLYIHFTVEFPESLSPDQTKAIEAVLPKPTKAAISDMEIDDCEETTLHDVNIEDEMKRKAQAQREAYDDDEEDHPGGAQRVQCAQQ</sequence>
<accession>P42825</accession>
<accession>Q43293</accession>
<accession>Q9C582</accession>
<feature type="chain" id="PRO_0000071078" description="Chaperone protein dnaJ 2">
    <location>
        <begin position="1"/>
        <end position="416"/>
    </location>
</feature>
<feature type="propeptide" id="PRO_0000396764" description="Removed in mature form" evidence="4">
    <location>
        <begin position="417"/>
        <end position="419"/>
    </location>
</feature>
<feature type="domain" description="J">
    <location>
        <begin position="14"/>
        <end position="75"/>
    </location>
</feature>
<feature type="repeat" description="CXXCXGXG motif">
    <location>
        <begin position="149"/>
        <end position="156"/>
    </location>
</feature>
<feature type="repeat" description="CXXCXGXG motif">
    <location>
        <begin position="165"/>
        <end position="172"/>
    </location>
</feature>
<feature type="repeat" description="CXXCXGXG motif">
    <location>
        <begin position="192"/>
        <end position="199"/>
    </location>
</feature>
<feature type="repeat" description="CXXCXGXG motif">
    <location>
        <begin position="208"/>
        <end position="215"/>
    </location>
</feature>
<feature type="zinc finger region" description="CR-type">
    <location>
        <begin position="136"/>
        <end position="220"/>
    </location>
</feature>
<feature type="region of interest" description="Disordered" evidence="2">
    <location>
        <begin position="378"/>
        <end position="419"/>
    </location>
</feature>
<feature type="compositionally biased region" description="Basic and acidic residues" evidence="2">
    <location>
        <begin position="378"/>
        <end position="391"/>
    </location>
</feature>
<feature type="binding site" evidence="1">
    <location>
        <position position="149"/>
    </location>
    <ligand>
        <name>Zn(2+)</name>
        <dbReference type="ChEBI" id="CHEBI:29105"/>
        <label>1</label>
    </ligand>
</feature>
<feature type="binding site" evidence="1">
    <location>
        <position position="152"/>
    </location>
    <ligand>
        <name>Zn(2+)</name>
        <dbReference type="ChEBI" id="CHEBI:29105"/>
        <label>1</label>
    </ligand>
</feature>
<feature type="binding site" evidence="1">
    <location>
        <position position="165"/>
    </location>
    <ligand>
        <name>Zn(2+)</name>
        <dbReference type="ChEBI" id="CHEBI:29105"/>
        <label>2</label>
    </ligand>
</feature>
<feature type="binding site" evidence="1">
    <location>
        <position position="168"/>
    </location>
    <ligand>
        <name>Zn(2+)</name>
        <dbReference type="ChEBI" id="CHEBI:29105"/>
        <label>2</label>
    </ligand>
</feature>
<feature type="binding site" evidence="1">
    <location>
        <position position="192"/>
    </location>
    <ligand>
        <name>Zn(2+)</name>
        <dbReference type="ChEBI" id="CHEBI:29105"/>
        <label>2</label>
    </ligand>
</feature>
<feature type="binding site" evidence="1">
    <location>
        <position position="195"/>
    </location>
    <ligand>
        <name>Zn(2+)</name>
        <dbReference type="ChEBI" id="CHEBI:29105"/>
        <label>2</label>
    </ligand>
</feature>
<feature type="binding site" evidence="1">
    <location>
        <position position="208"/>
    </location>
    <ligand>
        <name>Zn(2+)</name>
        <dbReference type="ChEBI" id="CHEBI:29105"/>
        <label>1</label>
    </ligand>
</feature>
<feature type="binding site" evidence="1">
    <location>
        <position position="211"/>
    </location>
    <ligand>
        <name>Zn(2+)</name>
        <dbReference type="ChEBI" id="CHEBI:29105"/>
        <label>1</label>
    </ligand>
</feature>
<feature type="modified residue" description="Cysteine methyl ester" evidence="4">
    <location>
        <position position="416"/>
    </location>
</feature>
<feature type="lipid moiety-binding region" description="S-farnesyl cysteine" evidence="5">
    <location>
        <position position="416"/>
    </location>
</feature>
<feature type="sequence conflict" description="In Ref. 5; CAA23386." evidence="4" ref="5">
    <original>G</original>
    <variation>D</variation>
    <location>
        <position position="87"/>
    </location>
</feature>
<feature type="sequence conflict" description="In Ref. 1; AAB86799." evidence="4" ref="1">
    <original>M</original>
    <variation>L</variation>
    <location>
        <position position="163"/>
    </location>
</feature>
<feature type="sequence conflict" description="In Ref. 1; AAB86799." evidence="4" ref="1">
    <original>C</original>
    <variation>S</variation>
    <location>
        <position position="195"/>
    </location>
</feature>
<feature type="sequence conflict" description="In Ref. 1; AAB86799." evidence="4" ref="1">
    <original>R</original>
    <variation>S</variation>
    <location>
        <position position="328"/>
    </location>
</feature>
<feature type="sequence conflict" description="In Ref. 1; AAB86799." evidence="4" ref="1">
    <original>D</original>
    <variation>V</variation>
    <location>
        <position position="402"/>
    </location>
</feature>
<feature type="sequence conflict" description="In Ref. 1; AAB86799." evidence="4" ref="1">
    <original>Q</original>
    <variation>H</variation>
    <location>
        <position position="412"/>
    </location>
</feature>
<proteinExistence type="evidence at protein level"/>
<organism>
    <name type="scientific">Arabidopsis thaliana</name>
    <name type="common">Mouse-ear cress</name>
    <dbReference type="NCBI Taxonomy" id="3702"/>
    <lineage>
        <taxon>Eukaryota</taxon>
        <taxon>Viridiplantae</taxon>
        <taxon>Streptophyta</taxon>
        <taxon>Embryophyta</taxon>
        <taxon>Tracheophyta</taxon>
        <taxon>Spermatophyta</taxon>
        <taxon>Magnoliopsida</taxon>
        <taxon>eudicotyledons</taxon>
        <taxon>Gunneridae</taxon>
        <taxon>Pentapetalae</taxon>
        <taxon>rosids</taxon>
        <taxon>malvids</taxon>
        <taxon>Brassicales</taxon>
        <taxon>Brassicaceae</taxon>
        <taxon>Camelineae</taxon>
        <taxon>Arabidopsis</taxon>
    </lineage>
</organism>